<reference key="1">
    <citation type="submission" date="2006-08" db="EMBL/GenBank/DDBJ databases">
        <authorList>
            <consortium name="NIH - Mammalian Gene Collection (MGC) project"/>
        </authorList>
    </citation>
    <scope>NUCLEOTIDE SEQUENCE [LARGE SCALE MRNA] (ISOFORM LONG)</scope>
    <source>
        <strain>Hereford</strain>
        <tissue>Fetal pons</tissue>
    </source>
</reference>
<reference key="2">
    <citation type="journal article" date="1991" name="J. Mol. Biol.">
        <title>Distinct forms of the protein kinase-dependent activator of tyrosine and tryptophan hydroxylases.</title>
        <authorList>
            <person name="Isobe T."/>
            <person name="Ichimura T."/>
            <person name="Sunaya T."/>
            <person name="Okuyama T."/>
            <person name="Takahashi N."/>
            <person name="Kuwano R."/>
            <person name="Takahashi Y."/>
        </authorList>
    </citation>
    <scope>PROTEIN SEQUENCE OF 2-246</scope>
</reference>
<reference key="3">
    <citation type="submission" date="1998-01" db="EMBL/GenBank/DDBJ databases">
        <title>Expression of 14-3-3 proteins in bovine retinal photoreceptors.</title>
        <authorList>
            <person name="Jones J.M."/>
            <person name="Niikura T."/>
            <person name="Pinke R.M."/>
            <person name="Guo W."/>
            <person name="Molday L."/>
            <person name="Leykam J."/>
            <person name="McConnell D.G."/>
        </authorList>
    </citation>
    <scope>NUCLEOTIDE SEQUENCE [MRNA] (ISOFORM SHORT)</scope>
</reference>
<reference key="4">
    <citation type="journal article" date="1994" name="J. Neurochem.">
        <title>Activation of protein kinase C by purified bovine brain 14-3-3: comparison with tyrosine hydroxylase activation.</title>
        <authorList>
            <person name="Tanji M."/>
            <person name="Horwitz R."/>
            <person name="Rosenfeld G."/>
            <person name="Waymire J.C."/>
        </authorList>
    </citation>
    <scope>FUNCTION</scope>
</reference>
<organism>
    <name type="scientific">Bos taurus</name>
    <name type="common">Bovine</name>
    <dbReference type="NCBI Taxonomy" id="9913"/>
    <lineage>
        <taxon>Eukaryota</taxon>
        <taxon>Metazoa</taxon>
        <taxon>Chordata</taxon>
        <taxon>Craniata</taxon>
        <taxon>Vertebrata</taxon>
        <taxon>Euteleostomi</taxon>
        <taxon>Mammalia</taxon>
        <taxon>Eutheria</taxon>
        <taxon>Laurasiatheria</taxon>
        <taxon>Artiodactyla</taxon>
        <taxon>Ruminantia</taxon>
        <taxon>Pecora</taxon>
        <taxon>Bovidae</taxon>
        <taxon>Bovinae</taxon>
        <taxon>Bos</taxon>
    </lineage>
</organism>
<feature type="chain" id="PRO_0000367899" description="14-3-3 protein beta/alpha">
    <location>
        <begin position="1"/>
        <end position="246"/>
    </location>
</feature>
<feature type="initiator methionine" description="Removed; alternate" evidence="3 6">
    <location>
        <position position="1"/>
    </location>
</feature>
<feature type="chain" id="PRO_0000000001" description="14-3-3 protein beta/alpha, N-terminally processed">
    <location>
        <begin position="2"/>
        <end position="246"/>
    </location>
</feature>
<feature type="site" description="Interaction with phosphoserine on interacting protein" evidence="1">
    <location>
        <position position="58"/>
    </location>
</feature>
<feature type="site" description="Interaction with phosphoserine on interacting protein" evidence="1">
    <location>
        <position position="129"/>
    </location>
</feature>
<feature type="modified residue" description="N-acetylmethionine" evidence="3">
    <location>
        <position position="1"/>
    </location>
</feature>
<feature type="modified residue" description="N-acetylthreonine; in 14-3-3 protein beta/alpha, N-terminally processed" evidence="3">
    <location>
        <position position="2"/>
    </location>
</feature>
<feature type="modified residue" description="Phosphothreonine" evidence="3">
    <location>
        <position position="2"/>
    </location>
</feature>
<feature type="modified residue" description="N6-acetyllysine" evidence="2">
    <location>
        <position position="5"/>
    </location>
</feature>
<feature type="modified residue" description="N6-acetyllysine; alternate" evidence="2">
    <location>
        <position position="51"/>
    </location>
</feature>
<feature type="modified residue" description="Phosphoserine" evidence="5">
    <location>
        <position position="60"/>
    </location>
</feature>
<feature type="modified residue" description="N6-acetyllysine" evidence="3">
    <location>
        <position position="70"/>
    </location>
</feature>
<feature type="modified residue" description="3'-nitrotyrosine" evidence="5">
    <location>
        <position position="84"/>
    </location>
</feature>
<feature type="modified residue" description="3'-nitrotyrosine" evidence="5">
    <location>
        <position position="106"/>
    </location>
</feature>
<feature type="modified residue" description="N6-acetyllysine" evidence="3">
    <location>
        <position position="117"/>
    </location>
</feature>
<feature type="modified residue" description="Phosphoserine" evidence="4">
    <location>
        <position position="186"/>
    </location>
</feature>
<feature type="modified residue" description="Phosphoserine" evidence="3">
    <location>
        <position position="232"/>
    </location>
</feature>
<feature type="cross-link" description="Glycyl lysine isopeptide (Lys-Gly) (interchain with G-Cter in SUMO2); alternate" evidence="2">
    <location>
        <position position="51"/>
    </location>
</feature>
<feature type="splice variant" id="VSP_018631" description="In isoform Short." evidence="8">
    <location>
        <begin position="1"/>
        <end position="2"/>
    </location>
</feature>
<feature type="sequence conflict" description="In Ref. 1; AAI20113." evidence="9" ref="1">
    <original>Q</original>
    <variation>E</variation>
    <location>
        <position position="101"/>
    </location>
</feature>
<feature type="modified residue" description="N-acetylmethionine" evidence="1">
    <location sequence="P68250-2">
        <position position="1"/>
    </location>
</feature>
<dbReference type="EMBL" id="BC120112">
    <property type="protein sequence ID" value="AAI20113.1"/>
    <property type="molecule type" value="mRNA"/>
</dbReference>
<dbReference type="EMBL" id="AF043736">
    <property type="protein sequence ID" value="AAC02090.1"/>
    <property type="molecule type" value="mRNA"/>
</dbReference>
<dbReference type="PIR" id="S13467">
    <property type="entry name" value="S13467"/>
</dbReference>
<dbReference type="RefSeq" id="NP_777219.2">
    <property type="nucleotide sequence ID" value="NM_174794.2"/>
</dbReference>
<dbReference type="SMR" id="P68250"/>
<dbReference type="FunCoup" id="P68250">
    <property type="interactions" value="1790"/>
</dbReference>
<dbReference type="STRING" id="9913.ENSBTAP00000022411"/>
<dbReference type="iPTMnet" id="P68250"/>
<dbReference type="PaxDb" id="9913-ENSBTAP00000022411"/>
<dbReference type="PeptideAtlas" id="P68250"/>
<dbReference type="GeneID" id="286863"/>
<dbReference type="KEGG" id="bta:286863"/>
<dbReference type="CTD" id="7529"/>
<dbReference type="eggNOG" id="KOG0841">
    <property type="taxonomic scope" value="Eukaryota"/>
</dbReference>
<dbReference type="HOGENOM" id="CLU_058290_1_0_1"/>
<dbReference type="InParanoid" id="P68250"/>
<dbReference type="OrthoDB" id="10260625at2759"/>
<dbReference type="TreeFam" id="TF102003"/>
<dbReference type="Proteomes" id="UP000009136">
    <property type="component" value="Unplaced"/>
</dbReference>
<dbReference type="GO" id="GO:0005737">
    <property type="term" value="C:cytoplasm"/>
    <property type="evidence" value="ECO:0000250"/>
    <property type="project" value="AgBase"/>
</dbReference>
<dbReference type="GO" id="GO:0042470">
    <property type="term" value="C:melanosome"/>
    <property type="evidence" value="ECO:0007669"/>
    <property type="project" value="UniProtKB-SubCell"/>
</dbReference>
<dbReference type="GO" id="GO:0048471">
    <property type="term" value="C:perinuclear region of cytoplasm"/>
    <property type="evidence" value="ECO:0000250"/>
    <property type="project" value="AgBase"/>
</dbReference>
<dbReference type="GO" id="GO:0019904">
    <property type="term" value="F:protein domain specific binding"/>
    <property type="evidence" value="ECO:0000250"/>
    <property type="project" value="AgBase"/>
</dbReference>
<dbReference type="GO" id="GO:0004860">
    <property type="term" value="F:protein kinase inhibitor activity"/>
    <property type="evidence" value="ECO:0000250"/>
    <property type="project" value="UniProtKB"/>
</dbReference>
<dbReference type="GO" id="GO:0045744">
    <property type="term" value="P:negative regulation of G protein-coupled receptor signaling pathway"/>
    <property type="evidence" value="ECO:0000250"/>
    <property type="project" value="UniProtKB"/>
</dbReference>
<dbReference type="GO" id="GO:0008104">
    <property type="term" value="P:protein localization"/>
    <property type="evidence" value="ECO:0000318"/>
    <property type="project" value="GO_Central"/>
</dbReference>
<dbReference type="GO" id="GO:0006605">
    <property type="term" value="P:protein targeting"/>
    <property type="evidence" value="ECO:0000250"/>
    <property type="project" value="AgBase"/>
</dbReference>
<dbReference type="GO" id="GO:0007165">
    <property type="term" value="P:signal transduction"/>
    <property type="evidence" value="ECO:0000318"/>
    <property type="project" value="GO_Central"/>
</dbReference>
<dbReference type="CDD" id="cd10022">
    <property type="entry name" value="14-3-3_beta_zeta"/>
    <property type="match status" value="1"/>
</dbReference>
<dbReference type="FunFam" id="1.20.190.20:FF:000001">
    <property type="entry name" value="14-3-3 gamma 1"/>
    <property type="match status" value="1"/>
</dbReference>
<dbReference type="Gene3D" id="1.20.190.20">
    <property type="entry name" value="14-3-3 domain"/>
    <property type="match status" value="1"/>
</dbReference>
<dbReference type="InterPro" id="IPR000308">
    <property type="entry name" value="14-3-3"/>
</dbReference>
<dbReference type="InterPro" id="IPR023409">
    <property type="entry name" value="14-3-3_CS"/>
</dbReference>
<dbReference type="InterPro" id="IPR036815">
    <property type="entry name" value="14-3-3_dom_sf"/>
</dbReference>
<dbReference type="InterPro" id="IPR023410">
    <property type="entry name" value="14-3-3_domain"/>
</dbReference>
<dbReference type="PANTHER" id="PTHR18860">
    <property type="entry name" value="14-3-3 PROTEIN"/>
    <property type="match status" value="1"/>
</dbReference>
<dbReference type="Pfam" id="PF00244">
    <property type="entry name" value="14-3-3"/>
    <property type="match status" value="1"/>
</dbReference>
<dbReference type="PIRSF" id="PIRSF000868">
    <property type="entry name" value="14-3-3"/>
    <property type="match status" value="1"/>
</dbReference>
<dbReference type="PRINTS" id="PR00305">
    <property type="entry name" value="1433ZETA"/>
</dbReference>
<dbReference type="SMART" id="SM00101">
    <property type="entry name" value="14_3_3"/>
    <property type="match status" value="1"/>
</dbReference>
<dbReference type="SUPFAM" id="SSF48445">
    <property type="entry name" value="14-3-3 protein"/>
    <property type="match status" value="1"/>
</dbReference>
<dbReference type="PROSITE" id="PS00796">
    <property type="entry name" value="1433_1"/>
    <property type="match status" value="1"/>
</dbReference>
<dbReference type="PROSITE" id="PS00797">
    <property type="entry name" value="1433_2"/>
    <property type="match status" value="1"/>
</dbReference>
<protein>
    <recommendedName>
        <fullName>14-3-3 protein beta/alpha</fullName>
    </recommendedName>
    <alternativeName>
        <fullName>Protein kinase C inhibitor protein 1</fullName>
        <shortName>KCIP-1</shortName>
    </alternativeName>
    <component>
        <recommendedName>
            <fullName>14-3-3 protein beta/alpha, N-terminally processed</fullName>
        </recommendedName>
    </component>
</protein>
<comment type="function">
    <text evidence="3 7">Adapter protein implicated in the regulation of a large spectrum of both general and specialized signaling pathways. Binds to a large number of partners, usually by recognition of a phosphoserine or phosphothreonine motif. Binding generally results in the modulation of the activity of the binding partner. Negative regulator of osteogenesis. Blocks the nuclear translocation of the phosphorylated form (by AKT1) of SRPK2 and antagonizes its stimulatory effect on cyclin D1 expression resulting in blockage of neuronal apoptosis elicited by SRPK2. Negative regulator of signaling cascades that mediate activation of MAP kinases via AKAP13.</text>
</comment>
<comment type="subunit">
    <text evidence="3 5">Homodimer (By similarity). Interacts with SAMSN1 and PRKCE (By similarity). Interacts with AKAP13. Interacts with SSH1 and TORC2/CRTC2. Interacts with ABL1; the interaction results in cytoplasmic location of ABL1 and inhibition of cABL-mediated apoptosis. Interacts with ROR2 (dimer); the interaction results in phosphorylation of YWHAB on tyrosine residues. Interacts with GAB2. Interacts with YAP1 (phosphorylated form). Interacts with the phosphorylated (by AKT1) form of SRPK2. Interacts with PKA-phosphorylated AANAT. Interacts with MYO1C. Interacts with SIRT2 (By similarity). Interacts with the 'Thr-369' phosphorylated form of DAPK2 (By similarity). Interacts with PI4KB, TBC1D22A and TBC1D22B. Interacts with the 'Ser-1134' and 'Ser-1161' phosphorylated form of SOS1 (By similarity). Interacts (via phosphorylated form) with YWHAB; this interaction occurs in a protein kinase AKT1-dependent manner (By similarity). Interacts with SLITRK1. Interacts with SYNPO2 (phosphorylated form); YWHAB competes with ACTN2 for interaction with SYNPO2 (By similarity). Interacts with RIPOR2 (via phosphorylated form); this interaction occurs in a chemokine-dependent manner and does not compete for binding of RIPOR2 with RHOA nor blocks inhibition of RIPOR2-mediated RHOA activity (By similarity). Interacts with MARK2 and MARK3 (By similarity). Interacts with TESK1; the interaction is dependent on the phosphorylation of TESK1 'Ser-439' and inhibits TESK1 kinase activity (By similarity). Interacts with MEFV (By similarity). Interacts with HDAC4 (By similarity). Interacts with ADAM22 (via C-terminus) (By similarity).</text>
</comment>
<comment type="subcellular location">
    <subcellularLocation>
        <location evidence="3">Cytoplasm</location>
    </subcellularLocation>
    <subcellularLocation>
        <location evidence="3">Melanosome</location>
    </subcellularLocation>
</comment>
<comment type="alternative products">
    <event type="alternative initiation"/>
    <isoform>
        <id>P68250-1</id>
        <name>Long</name>
        <sequence type="displayed"/>
    </isoform>
    <isoform>
        <id>P68250-2</id>
        <name>Short</name>
        <sequence type="described" ref="VSP_018631"/>
    </isoform>
    <text>It is uncertain whether isoform Short is produced by alternative initiation or another biological event.</text>
</comment>
<comment type="PTM">
    <text evidence="1">The alpha, brain-specific form differs from the beta form in being phosphorylated. Phosphorylated on Ser-60 by protein kinase C delta type catalytic subunit in a sphingosine-dependent fashion.</text>
</comment>
<comment type="similarity">
    <text evidence="9">Belongs to the 14-3-3 family.</text>
</comment>
<keyword id="KW-0007">Acetylation</keyword>
<keyword id="KW-0024">Alternative initiation</keyword>
<keyword id="KW-0963">Cytoplasm</keyword>
<keyword id="KW-0903">Direct protein sequencing</keyword>
<keyword id="KW-1017">Isopeptide bond</keyword>
<keyword id="KW-0944">Nitration</keyword>
<keyword id="KW-0597">Phosphoprotein</keyword>
<keyword id="KW-1185">Reference proteome</keyword>
<keyword id="KW-0832">Ubl conjugation</keyword>
<evidence type="ECO:0000250" key="1"/>
<evidence type="ECO:0000250" key="2">
    <source>
        <dbReference type="UniProtKB" id="P27348"/>
    </source>
</evidence>
<evidence type="ECO:0000250" key="3">
    <source>
        <dbReference type="UniProtKB" id="P31946"/>
    </source>
</evidence>
<evidence type="ECO:0000250" key="4">
    <source>
        <dbReference type="UniProtKB" id="P68251"/>
    </source>
</evidence>
<evidence type="ECO:0000250" key="5">
    <source>
        <dbReference type="UniProtKB" id="Q9CQV8"/>
    </source>
</evidence>
<evidence type="ECO:0000269" key="6">
    <source>
    </source>
</evidence>
<evidence type="ECO:0000269" key="7">
    <source>
    </source>
</evidence>
<evidence type="ECO:0000303" key="8">
    <source ref="3"/>
</evidence>
<evidence type="ECO:0000305" key="9"/>
<proteinExistence type="evidence at protein level"/>
<gene>
    <name type="primary">YWHAB</name>
</gene>
<sequence>MTMDKSELVQKAKLAEQAERYDDMAAAMKAVTEQGHELSNEERNLLSVAYKNVVGARRSSWRVISSIEQKTERNEKKQQMGKEYREKIEAELQDICNDVLQLLDKYLIPNATQPESKVFYLKMKGDYFRYLSEVASGDNKQTTVSNSQQAYQEAFEISKKEMQPTHPIRLGLALNFSVFYYEILNSPEKACSLAKTAFDEAIAELDTLNEESYKDSTLIMQLLRDNLTLWTSENQGDEGDAGEGEN</sequence>
<name>1433B_BOVIN</name>
<accession>P68250</accession>
<accession>P29358</accession>
<accession>Q0VCL1</accession>